<organism>
    <name type="scientific">Olimarabidopsis pumila</name>
    <name type="common">Dwarf rocket</name>
    <name type="synonym">Arabidopsis griffithiana</name>
    <dbReference type="NCBI Taxonomy" id="74718"/>
    <lineage>
        <taxon>Eukaryota</taxon>
        <taxon>Viridiplantae</taxon>
        <taxon>Streptophyta</taxon>
        <taxon>Embryophyta</taxon>
        <taxon>Tracheophyta</taxon>
        <taxon>Spermatophyta</taxon>
        <taxon>Magnoliopsida</taxon>
        <taxon>eudicotyledons</taxon>
        <taxon>Gunneridae</taxon>
        <taxon>Pentapetalae</taxon>
        <taxon>rosids</taxon>
        <taxon>malvids</taxon>
        <taxon>Brassicales</taxon>
        <taxon>Brassicaceae</taxon>
        <taxon>Alyssopsideae</taxon>
        <taxon>Olimarabidopsis</taxon>
    </lineage>
</organism>
<gene>
    <name type="primary">ndhG</name>
</gene>
<dbReference type="EC" id="7.1.1.-"/>
<dbReference type="EMBL" id="AP009368">
    <property type="protein sequence ID" value="BAF49993.1"/>
    <property type="molecule type" value="Genomic_DNA"/>
</dbReference>
<dbReference type="RefSeq" id="YP_001123168.1">
    <property type="nucleotide sequence ID" value="NC_009267.1"/>
</dbReference>
<dbReference type="SMR" id="A4QJY5"/>
<dbReference type="GeneID" id="4962412"/>
<dbReference type="GO" id="GO:0009535">
    <property type="term" value="C:chloroplast thylakoid membrane"/>
    <property type="evidence" value="ECO:0007669"/>
    <property type="project" value="UniProtKB-SubCell"/>
</dbReference>
<dbReference type="GO" id="GO:0008137">
    <property type="term" value="F:NADH dehydrogenase (ubiquinone) activity"/>
    <property type="evidence" value="ECO:0007669"/>
    <property type="project" value="InterPro"/>
</dbReference>
<dbReference type="GO" id="GO:0048038">
    <property type="term" value="F:quinone binding"/>
    <property type="evidence" value="ECO:0007669"/>
    <property type="project" value="UniProtKB-KW"/>
</dbReference>
<dbReference type="FunFam" id="1.20.120.1200:FF:000002">
    <property type="entry name" value="NAD(P)H-quinone oxidoreductase subunit 6, chloroplastic"/>
    <property type="match status" value="1"/>
</dbReference>
<dbReference type="Gene3D" id="1.20.120.1200">
    <property type="entry name" value="NADH-ubiquinone/plastoquinone oxidoreductase chain 6, subunit NuoJ"/>
    <property type="match status" value="1"/>
</dbReference>
<dbReference type="InterPro" id="IPR050290">
    <property type="entry name" value="NAD(P)H-Q_Oxidoreduct_6"/>
</dbReference>
<dbReference type="InterPro" id="IPR001457">
    <property type="entry name" value="NADH_UbQ/plastoQ_OxRdtase_su6"/>
</dbReference>
<dbReference type="InterPro" id="IPR042106">
    <property type="entry name" value="Nuo/plastoQ_OxRdtase_6_NuoJ"/>
</dbReference>
<dbReference type="PANTHER" id="PTHR48479">
    <property type="entry name" value="NAD(P)H-QUINONE OXIDOREDUCTASE SUBUNIT 6, CHLOROPLASTIC"/>
    <property type="match status" value="1"/>
</dbReference>
<dbReference type="PANTHER" id="PTHR48479:SF1">
    <property type="entry name" value="NAD(P)H-QUINONE OXIDOREDUCTASE SUBUNIT 6, CHLOROPLASTIC"/>
    <property type="match status" value="1"/>
</dbReference>
<dbReference type="Pfam" id="PF00499">
    <property type="entry name" value="Oxidored_q3"/>
    <property type="match status" value="1"/>
</dbReference>
<accession>A4QJY5</accession>
<feature type="chain" id="PRO_0000360280" description="NAD(P)H-quinone oxidoreductase subunit 6, chloroplastic">
    <location>
        <begin position="1"/>
        <end position="176"/>
    </location>
</feature>
<feature type="transmembrane region" description="Helical" evidence="2">
    <location>
        <begin position="10"/>
        <end position="30"/>
    </location>
</feature>
<feature type="transmembrane region" description="Helical" evidence="2">
    <location>
        <begin position="32"/>
        <end position="52"/>
    </location>
</feature>
<feature type="transmembrane region" description="Helical" evidence="2">
    <location>
        <begin position="61"/>
        <end position="81"/>
    </location>
</feature>
<feature type="transmembrane region" description="Helical" evidence="2">
    <location>
        <begin position="92"/>
        <end position="112"/>
    </location>
</feature>
<feature type="transmembrane region" description="Helical" evidence="2">
    <location>
        <begin position="152"/>
        <end position="172"/>
    </location>
</feature>
<proteinExistence type="inferred from homology"/>
<evidence type="ECO:0000250" key="1"/>
<evidence type="ECO:0000255" key="2"/>
<evidence type="ECO:0000305" key="3"/>
<geneLocation type="chloroplast"/>
<keyword id="KW-0150">Chloroplast</keyword>
<keyword id="KW-0472">Membrane</keyword>
<keyword id="KW-0520">NAD</keyword>
<keyword id="KW-0521">NADP</keyword>
<keyword id="KW-0934">Plastid</keyword>
<keyword id="KW-0618">Plastoquinone</keyword>
<keyword id="KW-0874">Quinone</keyword>
<keyword id="KW-0793">Thylakoid</keyword>
<keyword id="KW-1278">Translocase</keyword>
<keyword id="KW-0812">Transmembrane</keyword>
<keyword id="KW-1133">Transmembrane helix</keyword>
<keyword id="KW-0813">Transport</keyword>
<reference key="1">
    <citation type="submission" date="2007-03" db="EMBL/GenBank/DDBJ databases">
        <title>Sequence analysis of Arabidopsis pumila JS2 chloroplast DNA.</title>
        <authorList>
            <person name="Hosouchi T."/>
            <person name="Tsuruoka H."/>
            <person name="Kotani H."/>
        </authorList>
    </citation>
    <scope>NUCLEOTIDE SEQUENCE [LARGE SCALE GENOMIC DNA]</scope>
</reference>
<name>NU6C_OLIPU</name>
<protein>
    <recommendedName>
        <fullName>NAD(P)H-quinone oxidoreductase subunit 6, chloroplastic</fullName>
        <ecNumber>7.1.1.-</ecNumber>
    </recommendedName>
    <alternativeName>
        <fullName>NAD(P)H dehydrogenase subunit 6</fullName>
    </alternativeName>
    <alternativeName>
        <fullName>NADH-plastoquinone oxidoreductase subunit 6</fullName>
    </alternativeName>
</protein>
<sequence>MDLPGPIHDFLLVFLGSGLLVGGLGVVLLPNPIFSAFSLGFVLVCISLLYILSNSHFVAAAQLLIYVGAINVLIIFAVMFMNDSEYSTDFNLWTVGNGITSLVCTTILFLLMSTILDTSWYGVIWTTRLNQILEQDLISNSQQIGIHLSTDFFLPFELISIILLVALIGAISVARQ</sequence>
<comment type="function">
    <text evidence="1">NDH shuttles electrons from NAD(P)H:plastoquinone, via FMN and iron-sulfur (Fe-S) centers, to quinones in the photosynthetic chain and possibly in a chloroplast respiratory chain. The immediate electron acceptor for the enzyme in this species is believed to be plastoquinone. Couples the redox reaction to proton translocation, and thus conserves the redox energy in a proton gradient (By similarity).</text>
</comment>
<comment type="catalytic activity">
    <reaction>
        <text>a plastoquinone + NADH + (n+1) H(+)(in) = a plastoquinol + NAD(+) + n H(+)(out)</text>
        <dbReference type="Rhea" id="RHEA:42608"/>
        <dbReference type="Rhea" id="RHEA-COMP:9561"/>
        <dbReference type="Rhea" id="RHEA-COMP:9562"/>
        <dbReference type="ChEBI" id="CHEBI:15378"/>
        <dbReference type="ChEBI" id="CHEBI:17757"/>
        <dbReference type="ChEBI" id="CHEBI:57540"/>
        <dbReference type="ChEBI" id="CHEBI:57945"/>
        <dbReference type="ChEBI" id="CHEBI:62192"/>
    </reaction>
</comment>
<comment type="catalytic activity">
    <reaction>
        <text>a plastoquinone + NADPH + (n+1) H(+)(in) = a plastoquinol + NADP(+) + n H(+)(out)</text>
        <dbReference type="Rhea" id="RHEA:42612"/>
        <dbReference type="Rhea" id="RHEA-COMP:9561"/>
        <dbReference type="Rhea" id="RHEA-COMP:9562"/>
        <dbReference type="ChEBI" id="CHEBI:15378"/>
        <dbReference type="ChEBI" id="CHEBI:17757"/>
        <dbReference type="ChEBI" id="CHEBI:57783"/>
        <dbReference type="ChEBI" id="CHEBI:58349"/>
        <dbReference type="ChEBI" id="CHEBI:62192"/>
    </reaction>
</comment>
<comment type="subunit">
    <text evidence="1">NDH is composed of at least 16 different subunits, 5 of which are encoded in the nucleus.</text>
</comment>
<comment type="subcellular location">
    <subcellularLocation>
        <location evidence="1">Plastid</location>
        <location evidence="1">Chloroplast thylakoid membrane</location>
        <topology evidence="1">Multi-pass membrane protein</topology>
    </subcellularLocation>
</comment>
<comment type="similarity">
    <text evidence="3">Belongs to the complex I subunit 6 family.</text>
</comment>